<protein>
    <recommendedName>
        <fullName evidence="1">Aspartate/glutamate leucyltransferase</fullName>
        <ecNumber evidence="1">2.3.2.29</ecNumber>
    </recommendedName>
</protein>
<evidence type="ECO:0000255" key="1">
    <source>
        <dbReference type="HAMAP-Rule" id="MF_00689"/>
    </source>
</evidence>
<organism>
    <name type="scientific">Polynucleobacter necessarius subsp. necessarius (strain STIR1)</name>
    <dbReference type="NCBI Taxonomy" id="452638"/>
    <lineage>
        <taxon>Bacteria</taxon>
        <taxon>Pseudomonadati</taxon>
        <taxon>Pseudomonadota</taxon>
        <taxon>Betaproteobacteria</taxon>
        <taxon>Burkholderiales</taxon>
        <taxon>Burkholderiaceae</taxon>
        <taxon>Polynucleobacter</taxon>
    </lineage>
</organism>
<feature type="chain" id="PRO_1000131989" description="Aspartate/glutamate leucyltransferase">
    <location>
        <begin position="1"/>
        <end position="252"/>
    </location>
</feature>
<gene>
    <name evidence="1" type="primary">bpt</name>
    <name type="ordered locus">Pnec_1079</name>
</gene>
<name>BPT_POLNS</name>
<dbReference type="EC" id="2.3.2.29" evidence="1"/>
<dbReference type="EMBL" id="CP001010">
    <property type="protein sequence ID" value="ACB44253.1"/>
    <property type="molecule type" value="Genomic_DNA"/>
</dbReference>
<dbReference type="SMR" id="B1XV76"/>
<dbReference type="STRING" id="452638.Pnec_1079"/>
<dbReference type="KEGG" id="pne:Pnec_1079"/>
<dbReference type="eggNOG" id="COG2935">
    <property type="taxonomic scope" value="Bacteria"/>
</dbReference>
<dbReference type="HOGENOM" id="CLU_077607_0_0_4"/>
<dbReference type="OrthoDB" id="9782022at2"/>
<dbReference type="GO" id="GO:0005737">
    <property type="term" value="C:cytoplasm"/>
    <property type="evidence" value="ECO:0007669"/>
    <property type="project" value="UniProtKB-SubCell"/>
</dbReference>
<dbReference type="GO" id="GO:0004057">
    <property type="term" value="F:arginyl-tRNA--protein transferase activity"/>
    <property type="evidence" value="ECO:0007669"/>
    <property type="project" value="InterPro"/>
</dbReference>
<dbReference type="GO" id="GO:0008914">
    <property type="term" value="F:leucyl-tRNA--protein transferase activity"/>
    <property type="evidence" value="ECO:0007669"/>
    <property type="project" value="UniProtKB-UniRule"/>
</dbReference>
<dbReference type="GO" id="GO:0071596">
    <property type="term" value="P:ubiquitin-dependent protein catabolic process via the N-end rule pathway"/>
    <property type="evidence" value="ECO:0007669"/>
    <property type="project" value="InterPro"/>
</dbReference>
<dbReference type="HAMAP" id="MF_00689">
    <property type="entry name" value="Bpt"/>
    <property type="match status" value="1"/>
</dbReference>
<dbReference type="InterPro" id="IPR016181">
    <property type="entry name" value="Acyl_CoA_acyltransferase"/>
</dbReference>
<dbReference type="InterPro" id="IPR017138">
    <property type="entry name" value="Asp_Glu_LeuTrfase"/>
</dbReference>
<dbReference type="InterPro" id="IPR030700">
    <property type="entry name" value="N-end_Aminoacyl_Trfase"/>
</dbReference>
<dbReference type="InterPro" id="IPR007472">
    <property type="entry name" value="N-end_Aminoacyl_Trfase_C"/>
</dbReference>
<dbReference type="InterPro" id="IPR007471">
    <property type="entry name" value="N-end_Aminoacyl_Trfase_N"/>
</dbReference>
<dbReference type="NCBIfam" id="NF002341">
    <property type="entry name" value="PRK01305.1-1"/>
    <property type="match status" value="1"/>
</dbReference>
<dbReference type="NCBIfam" id="NF002342">
    <property type="entry name" value="PRK01305.1-3"/>
    <property type="match status" value="1"/>
</dbReference>
<dbReference type="NCBIfam" id="NF002346">
    <property type="entry name" value="PRK01305.2-3"/>
    <property type="match status" value="1"/>
</dbReference>
<dbReference type="PANTHER" id="PTHR21367">
    <property type="entry name" value="ARGININE-TRNA-PROTEIN TRANSFERASE 1"/>
    <property type="match status" value="1"/>
</dbReference>
<dbReference type="PANTHER" id="PTHR21367:SF1">
    <property type="entry name" value="ARGINYL-TRNA--PROTEIN TRANSFERASE 1"/>
    <property type="match status" value="1"/>
</dbReference>
<dbReference type="Pfam" id="PF04377">
    <property type="entry name" value="ATE_C"/>
    <property type="match status" value="1"/>
</dbReference>
<dbReference type="Pfam" id="PF04376">
    <property type="entry name" value="ATE_N"/>
    <property type="match status" value="1"/>
</dbReference>
<dbReference type="PIRSF" id="PIRSF037208">
    <property type="entry name" value="ATE_pro_prd"/>
    <property type="match status" value="1"/>
</dbReference>
<dbReference type="SUPFAM" id="SSF55729">
    <property type="entry name" value="Acyl-CoA N-acyltransferases (Nat)"/>
    <property type="match status" value="1"/>
</dbReference>
<accession>B1XV76</accession>
<proteinExistence type="inferred from homology"/>
<comment type="function">
    <text evidence="1">Functions in the N-end rule pathway of protein degradation where it conjugates Leu from its aminoacyl-tRNA to the N-termini of proteins containing an N-terminal aspartate or glutamate.</text>
</comment>
<comment type="catalytic activity">
    <reaction evidence="1">
        <text>N-terminal L-glutamyl-[protein] + L-leucyl-tRNA(Leu) = N-terminal L-leucyl-L-glutamyl-[protein] + tRNA(Leu) + H(+)</text>
        <dbReference type="Rhea" id="RHEA:50412"/>
        <dbReference type="Rhea" id="RHEA-COMP:9613"/>
        <dbReference type="Rhea" id="RHEA-COMP:9622"/>
        <dbReference type="Rhea" id="RHEA-COMP:12664"/>
        <dbReference type="Rhea" id="RHEA-COMP:12668"/>
        <dbReference type="ChEBI" id="CHEBI:15378"/>
        <dbReference type="ChEBI" id="CHEBI:64721"/>
        <dbReference type="ChEBI" id="CHEBI:78442"/>
        <dbReference type="ChEBI" id="CHEBI:78494"/>
        <dbReference type="ChEBI" id="CHEBI:133041"/>
        <dbReference type="EC" id="2.3.2.29"/>
    </reaction>
</comment>
<comment type="catalytic activity">
    <reaction evidence="1">
        <text>N-terminal L-aspartyl-[protein] + L-leucyl-tRNA(Leu) = N-terminal L-leucyl-L-aspartyl-[protein] + tRNA(Leu) + H(+)</text>
        <dbReference type="Rhea" id="RHEA:50420"/>
        <dbReference type="Rhea" id="RHEA-COMP:9613"/>
        <dbReference type="Rhea" id="RHEA-COMP:9622"/>
        <dbReference type="Rhea" id="RHEA-COMP:12669"/>
        <dbReference type="Rhea" id="RHEA-COMP:12674"/>
        <dbReference type="ChEBI" id="CHEBI:15378"/>
        <dbReference type="ChEBI" id="CHEBI:64720"/>
        <dbReference type="ChEBI" id="CHEBI:78442"/>
        <dbReference type="ChEBI" id="CHEBI:78494"/>
        <dbReference type="ChEBI" id="CHEBI:133042"/>
        <dbReference type="EC" id="2.3.2.29"/>
    </reaction>
</comment>
<comment type="subcellular location">
    <subcellularLocation>
        <location evidence="1">Cytoplasm</location>
    </subcellularLocation>
</comment>
<comment type="similarity">
    <text evidence="1">Belongs to the R-transferase family. Bpt subfamily.</text>
</comment>
<keyword id="KW-0012">Acyltransferase</keyword>
<keyword id="KW-0963">Cytoplasm</keyword>
<keyword id="KW-0808">Transferase</keyword>
<reference key="1">
    <citation type="journal article" date="2013" name="Proc. Natl. Acad. Sci. U.S.A.">
        <title>Polynucleobacter necessarius, a model for genome reduction in both free-living and symbiotic bacteria.</title>
        <authorList>
            <person name="Boscaro V."/>
            <person name="Felletti M."/>
            <person name="Vannini C."/>
            <person name="Ackerman M.S."/>
            <person name="Chain P.S."/>
            <person name="Malfatti S."/>
            <person name="Vergez L.M."/>
            <person name="Shin M."/>
            <person name="Doak T.G."/>
            <person name="Lynch M."/>
            <person name="Petroni G."/>
        </authorList>
    </citation>
    <scope>NUCLEOTIDE SEQUENCE [LARGE SCALE GENOMIC DNA]</scope>
    <source>
        <strain>STIR1</strain>
    </source>
</reference>
<sequence>MTQLKELPLTTLQFYATAPYACSYLPNKTARSQVATPSHLIHADVYGDLLNAGFRRSGLYTYRPYCDECKACIATRILVNQFIPSRSQRRAQKKHAGLEVFVLNLGYQEEHYQLYQRYQHERHAGGDMDSDDQDQYMQFLLQSRVNSRIVEFRDGPHDPHPGRLRMVSMIDILEEGISSVYTFYDTSSHAASYGSYNILWQLEQARTLSLPYLYLGYYIKESDKMSYKIKYQPMEGLIDDHWQKLLGHNIYP</sequence>